<sequence length="1220" mass="134503">MSQPPPPPPLPPPPPPPEAPQTSSSLAAAASPGGLSKRRDRRILSGSCPDPKCQARLFFPASGSVSIECTECGQRHEQQQLLGVEEVTDPDVVLHNLLRNALLGVTGAPKKNTELVKVMGLSNYHCKLLSPILARYGMDKQTGRAKLLRDMNQGELFDCALLGDRAFLIEPEHVNTVGYGKDRSGSLLYLHDTLEDIKRANKSQECLIPVHVDGDGHCLVHAVSRALVGRELFWHALRENLKQHFQQHLARYQALFHDFIDAAEWEDIINECDPLFVPPEGVPLGLRNIHIFGLANVLHRPIILLDSLSGMRSSGDYSATFLPGLIPAEKCTGRDGHLNKPICIAWSSSGRNHYIPLVGIKGAALPKLPMNLLPKAWGVPQDLIKKYIKLEEDGGCVIGGDRSLQDKYLLRLVAAMEEVFMDKHGIHPSLVADVHQYFYRRTGVIGVQPEEVTAAAKKAVMDNRLHKCLLYGALSELHVPSEWLAPGGKLYNLAKSTHGQLRPDKNYSFPLNNLVCSYDPVKDVLLPDYGLSNLTACNWCHGSSVRRVRGDGSIVYLDGDRTNSRSTGGKCGCGFKHFWEGKEYDNLPEAFPITLEWGGRVVRETVYWFQYESDPSLNSNVYDVAMKLVTKHFPGEFGSEILVQKVVHTILHQTAKKNPDDYTPVNIDGAHAQRVGDVQGQELESQLPTKIILTGQKTKTLHKEELNMSKTERTIQQNITEQASVMQKRKTEKLKQEQKGQPRTVSPSTIRDGPSSAPATPTKAPYSPTTSKEKKIRITTNDGRQSMVTLKPSTTFFELQESIAREFNIPPYLQCIRYGFPPKELMPPQAGMEKEPVPLQHGDRITIEILKGRAEGGPSTAAHSAHTVKQEEIAVTGKLSSKELQEQADKEMYSLCLLATLMGEDVWSYAKGLPHMFQQGGVFYNIMKKTMGMADGKHCTFPHLPGKTFVYNASEDRLELCVDAAGHFPIGPDVEDLVKEAVSQVRAEATTRSRESSPSHGLLKLGSGGVVKKKSEQLHNVTAFQGKGHSLGTASSHPHIDPRARETLAVRKHNTGTDFSNSSIKTEPPVFTAASSNSELIRIAPGVVTMRDGRQIDPDVVEAQRKKLQEMVSSIQASMDKHLRDQSAEQAPSDLSQRKVEVVSSVRPVNLQTGLPEPFSLTGGTENLNTETTDSHVADVLGAAFATRSKAQKENSMEEPEEMDSQDAETTNTTEPMDHS</sequence>
<gene>
    <name evidence="9" type="primary">Vcpip1</name>
    <name evidence="1" type="synonym">Vcip135</name>
</gene>
<evidence type="ECO:0000250" key="1">
    <source>
        <dbReference type="UniProtKB" id="Q8CF97"/>
    </source>
</evidence>
<evidence type="ECO:0000250" key="2">
    <source>
        <dbReference type="UniProtKB" id="Q96FW1"/>
    </source>
</evidence>
<evidence type="ECO:0000250" key="3">
    <source>
        <dbReference type="UniProtKB" id="Q96JH7"/>
    </source>
</evidence>
<evidence type="ECO:0000255" key="4">
    <source>
        <dbReference type="PROSITE-ProRule" id="PRU00139"/>
    </source>
</evidence>
<evidence type="ECO:0000256" key="5">
    <source>
        <dbReference type="SAM" id="MobiDB-lite"/>
    </source>
</evidence>
<evidence type="ECO:0000269" key="6">
    <source>
    </source>
</evidence>
<evidence type="ECO:0000303" key="7">
    <source>
    </source>
</evidence>
<evidence type="ECO:0000305" key="8"/>
<evidence type="ECO:0000312" key="9">
    <source>
        <dbReference type="MGI" id="MGI:1917925"/>
    </source>
</evidence>
<evidence type="ECO:0007744" key="10">
    <source>
    </source>
</evidence>
<feature type="chain" id="PRO_0000065770" description="Deubiquitinating protein VCPIP1">
    <location>
        <begin position="1"/>
        <end position="1220"/>
    </location>
</feature>
<feature type="domain" description="OTU" evidence="4">
    <location>
        <begin position="207"/>
        <end position="360"/>
    </location>
</feature>
<feature type="region of interest" description="Disordered" evidence="5">
    <location>
        <begin position="1"/>
        <end position="40"/>
    </location>
</feature>
<feature type="region of interest" description="Disordered" evidence="5">
    <location>
        <begin position="724"/>
        <end position="778"/>
    </location>
</feature>
<feature type="region of interest" description="Disordered" evidence="5">
    <location>
        <begin position="988"/>
        <end position="1008"/>
    </location>
</feature>
<feature type="region of interest" description="Disordered" evidence="5">
    <location>
        <begin position="1113"/>
        <end position="1140"/>
    </location>
</feature>
<feature type="region of interest" description="Disordered" evidence="5">
    <location>
        <begin position="1185"/>
        <end position="1220"/>
    </location>
</feature>
<feature type="compositionally biased region" description="Pro residues" evidence="5">
    <location>
        <begin position="1"/>
        <end position="19"/>
    </location>
</feature>
<feature type="compositionally biased region" description="Low complexity" evidence="5">
    <location>
        <begin position="20"/>
        <end position="35"/>
    </location>
</feature>
<feature type="compositionally biased region" description="Low complexity" evidence="5">
    <location>
        <begin position="754"/>
        <end position="770"/>
    </location>
</feature>
<feature type="compositionally biased region" description="Acidic residues" evidence="5">
    <location>
        <begin position="1197"/>
        <end position="1207"/>
    </location>
</feature>
<feature type="compositionally biased region" description="Polar residues" evidence="5">
    <location>
        <begin position="1208"/>
        <end position="1220"/>
    </location>
</feature>
<feature type="active site" evidence="2">
    <location>
        <position position="215"/>
    </location>
</feature>
<feature type="active site" description="Nucleophile" evidence="1">
    <location>
        <position position="218"/>
    </location>
</feature>
<feature type="active site" evidence="2">
    <location>
        <position position="353"/>
    </location>
</feature>
<feature type="modified residue" description="N6-acetyllysine" evidence="3">
    <location>
        <position position="407"/>
    </location>
</feature>
<feature type="modified residue" description="Phosphoserine" evidence="3">
    <location>
        <position position="746"/>
    </location>
</feature>
<feature type="modified residue" description="Phosphoserine" evidence="3">
    <location>
        <position position="756"/>
    </location>
</feature>
<feature type="modified residue" description="Phosphothreonine" evidence="3">
    <location>
        <position position="762"/>
    </location>
</feature>
<feature type="modified residue" description="Phosphoserine" evidence="3">
    <location>
        <position position="767"/>
    </location>
</feature>
<feature type="modified residue" description="Phosphoserine" evidence="3">
    <location>
        <position position="993"/>
    </location>
</feature>
<feature type="modified residue" description="Phosphoserine" evidence="3">
    <location>
        <position position="997"/>
    </location>
</feature>
<feature type="modified residue" description="Phosphoserine" evidence="3">
    <location>
        <position position="1076"/>
    </location>
</feature>
<feature type="modified residue" description="Phosphoserine" evidence="10">
    <location>
        <position position="1196"/>
    </location>
</feature>
<feature type="modified residue" description="Phosphoserine" evidence="3">
    <location>
        <position position="1205"/>
    </location>
</feature>
<feature type="splice variant" id="VSP_009376" description="In isoform 2." evidence="7">
    <original>EDV</original>
    <variation>KSN</variation>
    <location>
        <begin position="904"/>
        <end position="906"/>
    </location>
</feature>
<feature type="splice variant" id="VSP_009377" description="In isoform 2." evidence="7">
    <location>
        <begin position="907"/>
        <end position="1220"/>
    </location>
</feature>
<feature type="sequence conflict" description="In Ref. 2; AAH59209." evidence="8" ref="2">
    <original>Y</original>
    <variation>C</variation>
    <location>
        <position position="471"/>
    </location>
</feature>
<organism>
    <name type="scientific">Mus musculus</name>
    <name type="common">Mouse</name>
    <dbReference type="NCBI Taxonomy" id="10090"/>
    <lineage>
        <taxon>Eukaryota</taxon>
        <taxon>Metazoa</taxon>
        <taxon>Chordata</taxon>
        <taxon>Craniata</taxon>
        <taxon>Vertebrata</taxon>
        <taxon>Euteleostomi</taxon>
        <taxon>Mammalia</taxon>
        <taxon>Eutheria</taxon>
        <taxon>Euarchontoglires</taxon>
        <taxon>Glires</taxon>
        <taxon>Rodentia</taxon>
        <taxon>Myomorpha</taxon>
        <taxon>Muroidea</taxon>
        <taxon>Muridae</taxon>
        <taxon>Murinae</taxon>
        <taxon>Mus</taxon>
        <taxon>Mus</taxon>
    </lineage>
</organism>
<accession>Q8CDG3</accession>
<accession>Q7TMU9</accession>
<accession>Q8BP90</accession>
<reference key="1">
    <citation type="journal article" date="2005" name="Science">
        <title>The transcriptional landscape of the mammalian genome.</title>
        <authorList>
            <person name="Carninci P."/>
            <person name="Kasukawa T."/>
            <person name="Katayama S."/>
            <person name="Gough J."/>
            <person name="Frith M.C."/>
            <person name="Maeda N."/>
            <person name="Oyama R."/>
            <person name="Ravasi T."/>
            <person name="Lenhard B."/>
            <person name="Wells C."/>
            <person name="Kodzius R."/>
            <person name="Shimokawa K."/>
            <person name="Bajic V.B."/>
            <person name="Brenner S.E."/>
            <person name="Batalov S."/>
            <person name="Forrest A.R."/>
            <person name="Zavolan M."/>
            <person name="Davis M.J."/>
            <person name="Wilming L.G."/>
            <person name="Aidinis V."/>
            <person name="Allen J.E."/>
            <person name="Ambesi-Impiombato A."/>
            <person name="Apweiler R."/>
            <person name="Aturaliya R.N."/>
            <person name="Bailey T.L."/>
            <person name="Bansal M."/>
            <person name="Baxter L."/>
            <person name="Beisel K.W."/>
            <person name="Bersano T."/>
            <person name="Bono H."/>
            <person name="Chalk A.M."/>
            <person name="Chiu K.P."/>
            <person name="Choudhary V."/>
            <person name="Christoffels A."/>
            <person name="Clutterbuck D.R."/>
            <person name="Crowe M.L."/>
            <person name="Dalla E."/>
            <person name="Dalrymple B.P."/>
            <person name="de Bono B."/>
            <person name="Della Gatta G."/>
            <person name="di Bernardo D."/>
            <person name="Down T."/>
            <person name="Engstrom P."/>
            <person name="Fagiolini M."/>
            <person name="Faulkner G."/>
            <person name="Fletcher C.F."/>
            <person name="Fukushima T."/>
            <person name="Furuno M."/>
            <person name="Futaki S."/>
            <person name="Gariboldi M."/>
            <person name="Georgii-Hemming P."/>
            <person name="Gingeras T.R."/>
            <person name="Gojobori T."/>
            <person name="Green R.E."/>
            <person name="Gustincich S."/>
            <person name="Harbers M."/>
            <person name="Hayashi Y."/>
            <person name="Hensch T.K."/>
            <person name="Hirokawa N."/>
            <person name="Hill D."/>
            <person name="Huminiecki L."/>
            <person name="Iacono M."/>
            <person name="Ikeo K."/>
            <person name="Iwama A."/>
            <person name="Ishikawa T."/>
            <person name="Jakt M."/>
            <person name="Kanapin A."/>
            <person name="Katoh M."/>
            <person name="Kawasawa Y."/>
            <person name="Kelso J."/>
            <person name="Kitamura H."/>
            <person name="Kitano H."/>
            <person name="Kollias G."/>
            <person name="Krishnan S.P."/>
            <person name="Kruger A."/>
            <person name="Kummerfeld S.K."/>
            <person name="Kurochkin I.V."/>
            <person name="Lareau L.F."/>
            <person name="Lazarevic D."/>
            <person name="Lipovich L."/>
            <person name="Liu J."/>
            <person name="Liuni S."/>
            <person name="McWilliam S."/>
            <person name="Madan Babu M."/>
            <person name="Madera M."/>
            <person name="Marchionni L."/>
            <person name="Matsuda H."/>
            <person name="Matsuzawa S."/>
            <person name="Miki H."/>
            <person name="Mignone F."/>
            <person name="Miyake S."/>
            <person name="Morris K."/>
            <person name="Mottagui-Tabar S."/>
            <person name="Mulder N."/>
            <person name="Nakano N."/>
            <person name="Nakauchi H."/>
            <person name="Ng P."/>
            <person name="Nilsson R."/>
            <person name="Nishiguchi S."/>
            <person name="Nishikawa S."/>
            <person name="Nori F."/>
            <person name="Ohara O."/>
            <person name="Okazaki Y."/>
            <person name="Orlando V."/>
            <person name="Pang K.C."/>
            <person name="Pavan W.J."/>
            <person name="Pavesi G."/>
            <person name="Pesole G."/>
            <person name="Petrovsky N."/>
            <person name="Piazza S."/>
            <person name="Reed J."/>
            <person name="Reid J.F."/>
            <person name="Ring B.Z."/>
            <person name="Ringwald M."/>
            <person name="Rost B."/>
            <person name="Ruan Y."/>
            <person name="Salzberg S.L."/>
            <person name="Sandelin A."/>
            <person name="Schneider C."/>
            <person name="Schoenbach C."/>
            <person name="Sekiguchi K."/>
            <person name="Semple C.A."/>
            <person name="Seno S."/>
            <person name="Sessa L."/>
            <person name="Sheng Y."/>
            <person name="Shibata Y."/>
            <person name="Shimada H."/>
            <person name="Shimada K."/>
            <person name="Silva D."/>
            <person name="Sinclair B."/>
            <person name="Sperling S."/>
            <person name="Stupka E."/>
            <person name="Sugiura K."/>
            <person name="Sultana R."/>
            <person name="Takenaka Y."/>
            <person name="Taki K."/>
            <person name="Tammoja K."/>
            <person name="Tan S.L."/>
            <person name="Tang S."/>
            <person name="Taylor M.S."/>
            <person name="Tegner J."/>
            <person name="Teichmann S.A."/>
            <person name="Ueda H.R."/>
            <person name="van Nimwegen E."/>
            <person name="Verardo R."/>
            <person name="Wei C.L."/>
            <person name="Yagi K."/>
            <person name="Yamanishi H."/>
            <person name="Zabarovsky E."/>
            <person name="Zhu S."/>
            <person name="Zimmer A."/>
            <person name="Hide W."/>
            <person name="Bult C."/>
            <person name="Grimmond S.M."/>
            <person name="Teasdale R.D."/>
            <person name="Liu E.T."/>
            <person name="Brusic V."/>
            <person name="Quackenbush J."/>
            <person name="Wahlestedt C."/>
            <person name="Mattick J.S."/>
            <person name="Hume D.A."/>
            <person name="Kai C."/>
            <person name="Sasaki D."/>
            <person name="Tomaru Y."/>
            <person name="Fukuda S."/>
            <person name="Kanamori-Katayama M."/>
            <person name="Suzuki M."/>
            <person name="Aoki J."/>
            <person name="Arakawa T."/>
            <person name="Iida J."/>
            <person name="Imamura K."/>
            <person name="Itoh M."/>
            <person name="Kato T."/>
            <person name="Kawaji H."/>
            <person name="Kawagashira N."/>
            <person name="Kawashima T."/>
            <person name="Kojima M."/>
            <person name="Kondo S."/>
            <person name="Konno H."/>
            <person name="Nakano K."/>
            <person name="Ninomiya N."/>
            <person name="Nishio T."/>
            <person name="Okada M."/>
            <person name="Plessy C."/>
            <person name="Shibata K."/>
            <person name="Shiraki T."/>
            <person name="Suzuki S."/>
            <person name="Tagami M."/>
            <person name="Waki K."/>
            <person name="Watahiki A."/>
            <person name="Okamura-Oho Y."/>
            <person name="Suzuki H."/>
            <person name="Kawai J."/>
            <person name="Hayashizaki Y."/>
        </authorList>
    </citation>
    <scope>NUCLEOTIDE SEQUENCE [LARGE SCALE MRNA] (ISOFORM 1)</scope>
    <source>
        <strain>C57BL/6J</strain>
        <tissue>Embryo</tissue>
        <tissue>Testis</tissue>
    </source>
</reference>
<reference key="2">
    <citation type="journal article" date="2004" name="Genome Res.">
        <title>The status, quality, and expansion of the NIH full-length cDNA project: the Mammalian Gene Collection (MGC).</title>
        <authorList>
            <consortium name="The MGC Project Team"/>
        </authorList>
    </citation>
    <scope>NUCLEOTIDE SEQUENCE [LARGE SCALE MRNA] (ISOFORMS 1 AND 2)</scope>
    <source>
        <strain>C57BL/6J</strain>
        <tissue>Brain</tissue>
        <tissue>Hematopoietic</tissue>
    </source>
</reference>
<reference key="3">
    <citation type="journal article" date="2010" name="Cell">
        <title>A tissue-specific atlas of mouse protein phosphorylation and expression.</title>
        <authorList>
            <person name="Huttlin E.L."/>
            <person name="Jedrychowski M.P."/>
            <person name="Elias J.E."/>
            <person name="Goswami T."/>
            <person name="Rad R."/>
            <person name="Beausoleil S.A."/>
            <person name="Villen J."/>
            <person name="Haas W."/>
            <person name="Sowa M.E."/>
            <person name="Gygi S.P."/>
        </authorList>
    </citation>
    <scope>PHOSPHORYLATION [LARGE SCALE ANALYSIS] AT SER-1196</scope>
    <scope>IDENTIFICATION BY MASS SPECTROMETRY [LARGE SCALE ANALYSIS]</scope>
    <source>
        <tissue>Brain</tissue>
        <tissue>Brown adipose tissue</tissue>
        <tissue>Heart</tissue>
        <tissue>Kidney</tissue>
        <tissue>Liver</tissue>
        <tissue>Lung</tissue>
        <tissue>Pancreas</tissue>
        <tissue>Spleen</tissue>
        <tissue>Testis</tissue>
    </source>
</reference>
<reference key="4">
    <citation type="journal article" date="2020" name="Mol. Cell">
        <title>Tandem deubiquitination and acetylation of SPRTN promotes DNA-protein crosslink repair and protects against aging.</title>
        <authorList>
            <person name="Huang J."/>
            <person name="Zhou Q."/>
            <person name="Gao M."/>
            <person name="Nowsheen S."/>
            <person name="Zhao F."/>
            <person name="Kim W."/>
            <person name="Zhu Q."/>
            <person name="Kojima Y."/>
            <person name="Yin P."/>
            <person name="Zhang Y."/>
            <person name="Guo G."/>
            <person name="Tu X."/>
            <person name="Deng M."/>
            <person name="Luo K."/>
            <person name="Qin B."/>
            <person name="Machida Y."/>
            <person name="Lou Z."/>
        </authorList>
    </citation>
    <scope>DISRUPTION PHENOTYPE</scope>
</reference>
<proteinExistence type="evidence at protein level"/>
<comment type="function">
    <text evidence="1 3">Deubiquitinating enzyme involved in DNA repair and reassembly of the Golgi apparatus and the endoplasmic reticulum following mitosis (By similarity). Necessary for VCP-mediated reassembly of Golgi stacks after mitosis. Plays a role in VCP-mediated formation of transitional endoplasmic reticulum (tER). Mediates dissociation of the ternary complex containing STX5A, NSFL1C and VCP (By similarity). Also involved in DNA repair following phosphorylation by ATM or ATR: acts by catalyzing deubiquitination of SPRTN, thereby promoting SPRTN recruitment to chromatin and subsequent proteolytic cleavage of covalent DNA-protein cross-links (DPCs). Hydrolyzes 'Lys-11'- and 'Lys-48'-linked polyubiquitin chains (By similarity).</text>
</comment>
<comment type="catalytic activity">
    <reaction evidence="3">
        <text>Thiol-dependent hydrolysis of ester, thioester, amide, peptide and isopeptide bonds formed by the C-terminal Gly of ubiquitin (a 76-residue protein attached to proteins as an intracellular targeting signal).</text>
        <dbReference type="EC" id="3.4.19.12"/>
    </reaction>
</comment>
<comment type="subunit">
    <text evidence="1">Binds VCP and the ternary complex containing STX5A, NSFL1C and VCP.</text>
</comment>
<comment type="subcellular location">
    <subcellularLocation>
        <location evidence="3">Nucleus</location>
    </subcellularLocation>
    <subcellularLocation>
        <location evidence="3">Cytoplasm</location>
    </subcellularLocation>
    <subcellularLocation>
        <location evidence="1">Endoplasmic reticulum</location>
    </subcellularLocation>
    <subcellularLocation>
        <location evidence="1">Golgi apparatus</location>
        <location evidence="1">Golgi stack</location>
    </subcellularLocation>
    <text evidence="1 3">Associated with Golgi stacks and endoplasmic reticulum (By similarity). Displays cytoplasmic to nuclear translocation in response to DNA-protein cross-links (DPCs)-inducing agents (By similarity).</text>
</comment>
<comment type="alternative products">
    <event type="alternative splicing"/>
    <isoform>
        <id>Q8CDG3-1</id>
        <name>1</name>
        <sequence type="displayed"/>
    </isoform>
    <isoform>
        <id>Q8CDG3-2</id>
        <name>2</name>
        <sequence type="described" ref="VSP_009376 VSP_009377"/>
    </isoform>
</comment>
<comment type="PTM">
    <text evidence="3">Phosphorylated at Ser-1205 by ATM or ATR following induction of covalent DNA-protein cross-links (DPCs).</text>
</comment>
<comment type="disruption phenotype">
    <text evidence="6">Mice were born at nearly Mendelian ratios, although the birth rate was slightly decreased (PubMed:32649882). Mice display genomic instability and premature aging (PubMed:32649882). Cells show an accumulation of DNA-protein cross-links (DPCs) (PubMed:32649882).</text>
</comment>
<comment type="miscellaneous">
    <molecule>Isoform 2</molecule>
    <text evidence="8">May be due to an intron retention.</text>
</comment>
<comment type="sequence caution" evidence="8">
    <conflict type="erroneous initiation">
        <sequence resource="EMBL-CDS" id="AAH52908"/>
    </conflict>
</comment>
<keyword id="KW-0007">Acetylation</keyword>
<keyword id="KW-0025">Alternative splicing</keyword>
<keyword id="KW-0963">Cytoplasm</keyword>
<keyword id="KW-0227">DNA damage</keyword>
<keyword id="KW-0234">DNA repair</keyword>
<keyword id="KW-0256">Endoplasmic reticulum</keyword>
<keyword id="KW-0333">Golgi apparatus</keyword>
<keyword id="KW-0378">Hydrolase</keyword>
<keyword id="KW-0539">Nucleus</keyword>
<keyword id="KW-0597">Phosphoprotein</keyword>
<keyword id="KW-0645">Protease</keyword>
<keyword id="KW-1185">Reference proteome</keyword>
<keyword id="KW-0788">Thiol protease</keyword>
<keyword id="KW-0833">Ubl conjugation pathway</keyword>
<name>VCIP1_MOUSE</name>
<dbReference type="EC" id="3.4.19.12" evidence="3"/>
<dbReference type="EMBL" id="AK030104">
    <property type="protein sequence ID" value="BAC26787.1"/>
    <property type="molecule type" value="mRNA"/>
</dbReference>
<dbReference type="EMBL" id="AK077494">
    <property type="protein sequence ID" value="BAC36830.1"/>
    <property type="molecule type" value="mRNA"/>
</dbReference>
<dbReference type="EMBL" id="BC052908">
    <property type="protein sequence ID" value="AAH52908.1"/>
    <property type="status" value="ALT_INIT"/>
    <property type="molecule type" value="mRNA"/>
</dbReference>
<dbReference type="EMBL" id="BC059209">
    <property type="protein sequence ID" value="AAH59209.1"/>
    <property type="molecule type" value="mRNA"/>
</dbReference>
<dbReference type="CCDS" id="CCDS14814.1">
    <molecule id="Q8CDG3-1"/>
</dbReference>
<dbReference type="RefSeq" id="NP_775619.2">
    <property type="nucleotide sequence ID" value="NM_173443.3"/>
</dbReference>
<dbReference type="SMR" id="Q8CDG3"/>
<dbReference type="BioGRID" id="214195">
    <property type="interactions" value="29"/>
</dbReference>
<dbReference type="FunCoup" id="Q8CDG3">
    <property type="interactions" value="3569"/>
</dbReference>
<dbReference type="IntAct" id="Q8CDG3">
    <property type="interactions" value="12"/>
</dbReference>
<dbReference type="MINT" id="Q8CDG3"/>
<dbReference type="STRING" id="10090.ENSMUSP00000051248"/>
<dbReference type="GlyGen" id="Q8CDG3">
    <property type="glycosylation" value="5 sites, 1 N-linked glycan (1 site), 1 O-linked glycan (3 sites)"/>
</dbReference>
<dbReference type="iPTMnet" id="Q8CDG3"/>
<dbReference type="PhosphoSitePlus" id="Q8CDG3"/>
<dbReference type="SwissPalm" id="Q8CDG3"/>
<dbReference type="jPOST" id="Q8CDG3"/>
<dbReference type="PaxDb" id="10090-ENSMUSP00000051248"/>
<dbReference type="PeptideAtlas" id="Q8CDG3"/>
<dbReference type="ProteomicsDB" id="300116">
    <molecule id="Q8CDG3-1"/>
</dbReference>
<dbReference type="ProteomicsDB" id="300117">
    <molecule id="Q8CDG3-2"/>
</dbReference>
<dbReference type="Pumba" id="Q8CDG3"/>
<dbReference type="DNASU" id="70675"/>
<dbReference type="GeneID" id="70675"/>
<dbReference type="KEGG" id="mmu:70675"/>
<dbReference type="UCSC" id="uc007ags.3">
    <molecule id="Q8CDG3-1"/>
    <property type="organism name" value="mouse"/>
</dbReference>
<dbReference type="AGR" id="MGI:1917925"/>
<dbReference type="CTD" id="80124"/>
<dbReference type="MGI" id="MGI:1917925">
    <property type="gene designation" value="Vcpip1"/>
</dbReference>
<dbReference type="eggNOG" id="KOG4345">
    <property type="taxonomic scope" value="Eukaryota"/>
</dbReference>
<dbReference type="InParanoid" id="Q8CDG3"/>
<dbReference type="OrthoDB" id="10012024at2759"/>
<dbReference type="PhylomeDB" id="Q8CDG3"/>
<dbReference type="TreeFam" id="TF329469"/>
<dbReference type="Reactome" id="R-MMU-5689896">
    <property type="pathway name" value="Ovarian tumor domain proteases"/>
</dbReference>
<dbReference type="BioGRID-ORCS" id="70675">
    <property type="hits" value="10 hits in 76 CRISPR screens"/>
</dbReference>
<dbReference type="ChiTaRS" id="Vcpip1">
    <property type="organism name" value="mouse"/>
</dbReference>
<dbReference type="PRO" id="PR:Q8CDG3"/>
<dbReference type="Proteomes" id="UP000000589">
    <property type="component" value="Unplaced"/>
</dbReference>
<dbReference type="RNAct" id="Q8CDG3">
    <property type="molecule type" value="protein"/>
</dbReference>
<dbReference type="GO" id="GO:0005783">
    <property type="term" value="C:endoplasmic reticulum"/>
    <property type="evidence" value="ECO:0007669"/>
    <property type="project" value="UniProtKB-SubCell"/>
</dbReference>
<dbReference type="GO" id="GO:0005795">
    <property type="term" value="C:Golgi stack"/>
    <property type="evidence" value="ECO:0007669"/>
    <property type="project" value="UniProtKB-SubCell"/>
</dbReference>
<dbReference type="GO" id="GO:0005634">
    <property type="term" value="C:nucleus"/>
    <property type="evidence" value="ECO:0000250"/>
    <property type="project" value="UniProtKB"/>
</dbReference>
<dbReference type="GO" id="GO:0045202">
    <property type="term" value="C:synapse"/>
    <property type="evidence" value="ECO:0000314"/>
    <property type="project" value="SynGO"/>
</dbReference>
<dbReference type="GO" id="GO:0004843">
    <property type="term" value="F:cysteine-type deubiquitinase activity"/>
    <property type="evidence" value="ECO:0000250"/>
    <property type="project" value="UniProtKB"/>
</dbReference>
<dbReference type="GO" id="GO:0006974">
    <property type="term" value="P:DNA damage response"/>
    <property type="evidence" value="ECO:0000250"/>
    <property type="project" value="UniProtKB"/>
</dbReference>
<dbReference type="GO" id="GO:0016579">
    <property type="term" value="P:protein deubiquitination"/>
    <property type="evidence" value="ECO:0000250"/>
    <property type="project" value="UniProtKB"/>
</dbReference>
<dbReference type="GO" id="GO:0035871">
    <property type="term" value="P:protein K11-linked deubiquitination"/>
    <property type="evidence" value="ECO:0000250"/>
    <property type="project" value="UniProtKB"/>
</dbReference>
<dbReference type="GO" id="GO:0071108">
    <property type="term" value="P:protein K48-linked deubiquitination"/>
    <property type="evidence" value="ECO:0000250"/>
    <property type="project" value="UniProtKB"/>
</dbReference>
<dbReference type="GO" id="GO:0016567">
    <property type="term" value="P:protein ubiquitination"/>
    <property type="evidence" value="ECO:0000250"/>
    <property type="project" value="UniProtKB"/>
</dbReference>
<dbReference type="GO" id="GO:0106300">
    <property type="term" value="P:protein-DNA covalent cross-linking repair"/>
    <property type="evidence" value="ECO:0000250"/>
    <property type="project" value="UniProtKB"/>
</dbReference>
<dbReference type="GO" id="GO:0006508">
    <property type="term" value="P:proteolysis"/>
    <property type="evidence" value="ECO:0007669"/>
    <property type="project" value="UniProtKB-KW"/>
</dbReference>
<dbReference type="GO" id="GO:1905634">
    <property type="term" value="P:regulation of protein localization to chromatin"/>
    <property type="evidence" value="ECO:0000250"/>
    <property type="project" value="UniProtKB"/>
</dbReference>
<dbReference type="CDD" id="cd22769">
    <property type="entry name" value="OTU_VCIP135"/>
    <property type="match status" value="1"/>
</dbReference>
<dbReference type="CDD" id="cd17059">
    <property type="entry name" value="Ubl_OTU1"/>
    <property type="match status" value="1"/>
</dbReference>
<dbReference type="FunFam" id="3.10.20.90:FF:000146">
    <property type="entry name" value="deubiquitinating protein VCIP135 isoform X1"/>
    <property type="match status" value="1"/>
</dbReference>
<dbReference type="FunFam" id="3.90.70.80:FF:000004">
    <property type="entry name" value="deubiquitinating protein VCIP135 isoform X2"/>
    <property type="match status" value="1"/>
</dbReference>
<dbReference type="Gene3D" id="3.90.70.80">
    <property type="match status" value="1"/>
</dbReference>
<dbReference type="Gene3D" id="3.10.20.90">
    <property type="entry name" value="Phosphatidylinositol 3-kinase Catalytic Subunit, Chain A, domain 1"/>
    <property type="match status" value="1"/>
</dbReference>
<dbReference type="InterPro" id="IPR048857">
    <property type="entry name" value="OTU1_Ubl"/>
</dbReference>
<dbReference type="InterPro" id="IPR003323">
    <property type="entry name" value="OTU_dom"/>
</dbReference>
<dbReference type="InterPro" id="IPR029071">
    <property type="entry name" value="Ubiquitin-like_domsf"/>
</dbReference>
<dbReference type="InterPro" id="IPR039087">
    <property type="entry name" value="VCPIP1"/>
</dbReference>
<dbReference type="InterPro" id="IPR045827">
    <property type="entry name" value="VCPIP1_N"/>
</dbReference>
<dbReference type="PANTHER" id="PTHR14843">
    <property type="entry name" value="DEUBIQUITINATING PROTEIN VCIP135"/>
    <property type="match status" value="1"/>
</dbReference>
<dbReference type="PANTHER" id="PTHR14843:SF2">
    <property type="entry name" value="DEUBIQUITINATING PROTEIN VCPIP1"/>
    <property type="match status" value="1"/>
</dbReference>
<dbReference type="Pfam" id="PF02338">
    <property type="entry name" value="OTU"/>
    <property type="match status" value="1"/>
</dbReference>
<dbReference type="Pfam" id="PF21403">
    <property type="entry name" value="OTU1_UBXL"/>
    <property type="match status" value="1"/>
</dbReference>
<dbReference type="Pfam" id="PF19437">
    <property type="entry name" value="VCIP135_N"/>
    <property type="match status" value="1"/>
</dbReference>
<dbReference type="SUPFAM" id="SSF54236">
    <property type="entry name" value="Ubiquitin-like"/>
    <property type="match status" value="1"/>
</dbReference>
<dbReference type="PROSITE" id="PS50802">
    <property type="entry name" value="OTU"/>
    <property type="match status" value="1"/>
</dbReference>
<protein>
    <recommendedName>
        <fullName evidence="8">Deubiquitinating protein VCPIP1</fullName>
        <ecNumber evidence="3">3.4.19.12</ecNumber>
    </recommendedName>
    <alternativeName>
        <fullName evidence="8">Valosin-containing protein p97/p47 complex-interacting protein 1</fullName>
    </alternativeName>
    <alternativeName>
        <fullName evidence="1">Valosin-containing protein p97/p47 complex-interacting protein p135</fullName>
        <shortName evidence="1">VCP/p47 complex-interacting 135-kDa protein</shortName>
    </alternativeName>
</protein>